<keyword id="KW-0030">Aminoacyl-tRNA synthetase</keyword>
<keyword id="KW-0067">ATP-binding</keyword>
<keyword id="KW-0963">Cytoplasm</keyword>
<keyword id="KW-0436">Ligase</keyword>
<keyword id="KW-0547">Nucleotide-binding</keyword>
<keyword id="KW-0648">Protein biosynthesis</keyword>
<keyword id="KW-1185">Reference proteome</keyword>
<gene>
    <name evidence="1" type="primary">serS</name>
    <name type="ordered locus">PSHAa1712</name>
</gene>
<evidence type="ECO:0000255" key="1">
    <source>
        <dbReference type="HAMAP-Rule" id="MF_00176"/>
    </source>
</evidence>
<name>SYS_PSET1</name>
<dbReference type="EC" id="6.1.1.11" evidence="1"/>
<dbReference type="EMBL" id="CR954246">
    <property type="protein sequence ID" value="CAI86784.1"/>
    <property type="molecule type" value="Genomic_DNA"/>
</dbReference>
<dbReference type="SMR" id="Q3IH21"/>
<dbReference type="STRING" id="326442.PSHAa1712"/>
<dbReference type="KEGG" id="pha:PSHAa1712"/>
<dbReference type="PATRIC" id="fig|326442.8.peg.1658"/>
<dbReference type="eggNOG" id="COG0172">
    <property type="taxonomic scope" value="Bacteria"/>
</dbReference>
<dbReference type="HOGENOM" id="CLU_023797_1_1_6"/>
<dbReference type="BioCyc" id="PHAL326442:PSHA_RS08395-MONOMER"/>
<dbReference type="UniPathway" id="UPA00906">
    <property type="reaction ID" value="UER00895"/>
</dbReference>
<dbReference type="Proteomes" id="UP000006843">
    <property type="component" value="Chromosome I"/>
</dbReference>
<dbReference type="GO" id="GO:0005737">
    <property type="term" value="C:cytoplasm"/>
    <property type="evidence" value="ECO:0007669"/>
    <property type="project" value="UniProtKB-SubCell"/>
</dbReference>
<dbReference type="GO" id="GO:0005524">
    <property type="term" value="F:ATP binding"/>
    <property type="evidence" value="ECO:0007669"/>
    <property type="project" value="UniProtKB-UniRule"/>
</dbReference>
<dbReference type="GO" id="GO:0004828">
    <property type="term" value="F:serine-tRNA ligase activity"/>
    <property type="evidence" value="ECO:0007669"/>
    <property type="project" value="UniProtKB-UniRule"/>
</dbReference>
<dbReference type="GO" id="GO:0016260">
    <property type="term" value="P:selenocysteine biosynthetic process"/>
    <property type="evidence" value="ECO:0007669"/>
    <property type="project" value="UniProtKB-UniRule"/>
</dbReference>
<dbReference type="GO" id="GO:0006434">
    <property type="term" value="P:seryl-tRNA aminoacylation"/>
    <property type="evidence" value="ECO:0007669"/>
    <property type="project" value="UniProtKB-UniRule"/>
</dbReference>
<dbReference type="CDD" id="cd00770">
    <property type="entry name" value="SerRS_core"/>
    <property type="match status" value="1"/>
</dbReference>
<dbReference type="Gene3D" id="3.30.930.10">
    <property type="entry name" value="Bira Bifunctional Protein, Domain 2"/>
    <property type="match status" value="1"/>
</dbReference>
<dbReference type="Gene3D" id="1.10.287.40">
    <property type="entry name" value="Serine-tRNA synthetase, tRNA binding domain"/>
    <property type="match status" value="1"/>
</dbReference>
<dbReference type="HAMAP" id="MF_00176">
    <property type="entry name" value="Ser_tRNA_synth_type1"/>
    <property type="match status" value="1"/>
</dbReference>
<dbReference type="InterPro" id="IPR002314">
    <property type="entry name" value="aa-tRNA-synt_IIb"/>
</dbReference>
<dbReference type="InterPro" id="IPR006195">
    <property type="entry name" value="aa-tRNA-synth_II"/>
</dbReference>
<dbReference type="InterPro" id="IPR045864">
    <property type="entry name" value="aa-tRNA-synth_II/BPL/LPL"/>
</dbReference>
<dbReference type="InterPro" id="IPR002317">
    <property type="entry name" value="Ser-tRNA-ligase_type_1"/>
</dbReference>
<dbReference type="InterPro" id="IPR015866">
    <property type="entry name" value="Ser-tRNA-synth_1_N"/>
</dbReference>
<dbReference type="InterPro" id="IPR042103">
    <property type="entry name" value="SerRS_1_N_sf"/>
</dbReference>
<dbReference type="InterPro" id="IPR033729">
    <property type="entry name" value="SerRS_core"/>
</dbReference>
<dbReference type="InterPro" id="IPR010978">
    <property type="entry name" value="tRNA-bd_arm"/>
</dbReference>
<dbReference type="NCBIfam" id="TIGR00414">
    <property type="entry name" value="serS"/>
    <property type="match status" value="1"/>
</dbReference>
<dbReference type="PANTHER" id="PTHR43697:SF1">
    <property type="entry name" value="SERINE--TRNA LIGASE"/>
    <property type="match status" value="1"/>
</dbReference>
<dbReference type="PANTHER" id="PTHR43697">
    <property type="entry name" value="SERYL-TRNA SYNTHETASE"/>
    <property type="match status" value="1"/>
</dbReference>
<dbReference type="Pfam" id="PF02403">
    <property type="entry name" value="Seryl_tRNA_N"/>
    <property type="match status" value="1"/>
</dbReference>
<dbReference type="Pfam" id="PF00587">
    <property type="entry name" value="tRNA-synt_2b"/>
    <property type="match status" value="1"/>
</dbReference>
<dbReference type="PIRSF" id="PIRSF001529">
    <property type="entry name" value="Ser-tRNA-synth_IIa"/>
    <property type="match status" value="1"/>
</dbReference>
<dbReference type="PRINTS" id="PR00981">
    <property type="entry name" value="TRNASYNTHSER"/>
</dbReference>
<dbReference type="SUPFAM" id="SSF55681">
    <property type="entry name" value="Class II aaRS and biotin synthetases"/>
    <property type="match status" value="1"/>
</dbReference>
<dbReference type="SUPFAM" id="SSF46589">
    <property type="entry name" value="tRNA-binding arm"/>
    <property type="match status" value="1"/>
</dbReference>
<dbReference type="PROSITE" id="PS50862">
    <property type="entry name" value="AA_TRNA_LIGASE_II"/>
    <property type="match status" value="1"/>
</dbReference>
<organism>
    <name type="scientific">Pseudoalteromonas translucida (strain TAC 125)</name>
    <dbReference type="NCBI Taxonomy" id="326442"/>
    <lineage>
        <taxon>Bacteria</taxon>
        <taxon>Pseudomonadati</taxon>
        <taxon>Pseudomonadota</taxon>
        <taxon>Gammaproteobacteria</taxon>
        <taxon>Alteromonadales</taxon>
        <taxon>Pseudoalteromonadaceae</taxon>
        <taxon>Pseudoalteromonas</taxon>
    </lineage>
</organism>
<sequence length="434" mass="47953">MLDSKFLRQDIEQTAARLAARGYELDVATVTALEEKRKTLQVKTQELQSQRNASAKAIGQAKAKGEDAQPLLDAVANLGSELDAAKAQQDVVLAAINDIALAIPNLPDESVPAGKDEDDNVEILTWGTPKKFDFDVKDHVDVGQDLNGLDFEMGVKISGARFTVMRGQVARMHRALTQYMLDTHTDKNGYTEMYVPYLVNSASLYGTSQLPKFAGDLFHTLGLVNDDGEQQSGFSLIPTAEVPLTNSARDEIYDESDLPIRLTAHTPCFRSEAGSYGRDTRGLIRQHQFDKVELVQLVKPEDSMATLEELTGHAEQILQELELPYRKVILCMGDMGFGSAKTYDLEVWLPAQNTYREISSCSNMADFQARRMQARFRREGAKKPELLHTLNGSGLAVGRTLVAILENYQQADGSVVVPEVLRPYMGGLEVIGKQ</sequence>
<reference key="1">
    <citation type="journal article" date="2005" name="Genome Res.">
        <title>Coping with cold: the genome of the versatile marine Antarctica bacterium Pseudoalteromonas haloplanktis TAC125.</title>
        <authorList>
            <person name="Medigue C."/>
            <person name="Krin E."/>
            <person name="Pascal G."/>
            <person name="Barbe V."/>
            <person name="Bernsel A."/>
            <person name="Bertin P.N."/>
            <person name="Cheung F."/>
            <person name="Cruveiller S."/>
            <person name="D'Amico S."/>
            <person name="Duilio A."/>
            <person name="Fang G."/>
            <person name="Feller G."/>
            <person name="Ho C."/>
            <person name="Mangenot S."/>
            <person name="Marino G."/>
            <person name="Nilsson J."/>
            <person name="Parrilli E."/>
            <person name="Rocha E.P.C."/>
            <person name="Rouy Z."/>
            <person name="Sekowska A."/>
            <person name="Tutino M.L."/>
            <person name="Vallenet D."/>
            <person name="von Heijne G."/>
            <person name="Danchin A."/>
        </authorList>
    </citation>
    <scope>NUCLEOTIDE SEQUENCE [LARGE SCALE GENOMIC DNA]</scope>
    <source>
        <strain>TAC 125</strain>
    </source>
</reference>
<comment type="function">
    <text evidence="1">Catalyzes the attachment of serine to tRNA(Ser). Is also able to aminoacylate tRNA(Sec) with serine, to form the misacylated tRNA L-seryl-tRNA(Sec), which will be further converted into selenocysteinyl-tRNA(Sec).</text>
</comment>
<comment type="catalytic activity">
    <reaction evidence="1">
        <text>tRNA(Ser) + L-serine + ATP = L-seryl-tRNA(Ser) + AMP + diphosphate + H(+)</text>
        <dbReference type="Rhea" id="RHEA:12292"/>
        <dbReference type="Rhea" id="RHEA-COMP:9669"/>
        <dbReference type="Rhea" id="RHEA-COMP:9703"/>
        <dbReference type="ChEBI" id="CHEBI:15378"/>
        <dbReference type="ChEBI" id="CHEBI:30616"/>
        <dbReference type="ChEBI" id="CHEBI:33019"/>
        <dbReference type="ChEBI" id="CHEBI:33384"/>
        <dbReference type="ChEBI" id="CHEBI:78442"/>
        <dbReference type="ChEBI" id="CHEBI:78533"/>
        <dbReference type="ChEBI" id="CHEBI:456215"/>
        <dbReference type="EC" id="6.1.1.11"/>
    </reaction>
</comment>
<comment type="catalytic activity">
    <reaction evidence="1">
        <text>tRNA(Sec) + L-serine + ATP = L-seryl-tRNA(Sec) + AMP + diphosphate + H(+)</text>
        <dbReference type="Rhea" id="RHEA:42580"/>
        <dbReference type="Rhea" id="RHEA-COMP:9742"/>
        <dbReference type="Rhea" id="RHEA-COMP:10128"/>
        <dbReference type="ChEBI" id="CHEBI:15378"/>
        <dbReference type="ChEBI" id="CHEBI:30616"/>
        <dbReference type="ChEBI" id="CHEBI:33019"/>
        <dbReference type="ChEBI" id="CHEBI:33384"/>
        <dbReference type="ChEBI" id="CHEBI:78442"/>
        <dbReference type="ChEBI" id="CHEBI:78533"/>
        <dbReference type="ChEBI" id="CHEBI:456215"/>
        <dbReference type="EC" id="6.1.1.11"/>
    </reaction>
</comment>
<comment type="pathway">
    <text evidence="1">Aminoacyl-tRNA biosynthesis; selenocysteinyl-tRNA(Sec) biosynthesis; L-seryl-tRNA(Sec) from L-serine and tRNA(Sec): step 1/1.</text>
</comment>
<comment type="subunit">
    <text evidence="1">Homodimer. The tRNA molecule binds across the dimer.</text>
</comment>
<comment type="subcellular location">
    <subcellularLocation>
        <location evidence="1">Cytoplasm</location>
    </subcellularLocation>
</comment>
<comment type="domain">
    <text evidence="1">Consists of two distinct domains, a catalytic core and a N-terminal extension that is involved in tRNA binding.</text>
</comment>
<comment type="similarity">
    <text evidence="1">Belongs to the class-II aminoacyl-tRNA synthetase family. Type-1 seryl-tRNA synthetase subfamily.</text>
</comment>
<protein>
    <recommendedName>
        <fullName evidence="1">Serine--tRNA ligase</fullName>
        <ecNumber evidence="1">6.1.1.11</ecNumber>
    </recommendedName>
    <alternativeName>
        <fullName evidence="1">Seryl-tRNA synthetase</fullName>
        <shortName evidence="1">SerRS</shortName>
    </alternativeName>
    <alternativeName>
        <fullName evidence="1">Seryl-tRNA(Ser/Sec) synthetase</fullName>
    </alternativeName>
</protein>
<accession>Q3IH21</accession>
<proteinExistence type="inferred from homology"/>
<feature type="chain" id="PRO_1000019776" description="Serine--tRNA ligase">
    <location>
        <begin position="1"/>
        <end position="434"/>
    </location>
</feature>
<feature type="binding site" evidence="1">
    <location>
        <begin position="239"/>
        <end position="241"/>
    </location>
    <ligand>
        <name>L-serine</name>
        <dbReference type="ChEBI" id="CHEBI:33384"/>
    </ligand>
</feature>
<feature type="binding site" evidence="1">
    <location>
        <begin position="270"/>
        <end position="272"/>
    </location>
    <ligand>
        <name>ATP</name>
        <dbReference type="ChEBI" id="CHEBI:30616"/>
    </ligand>
</feature>
<feature type="binding site" evidence="1">
    <location>
        <position position="293"/>
    </location>
    <ligand>
        <name>L-serine</name>
        <dbReference type="ChEBI" id="CHEBI:33384"/>
    </ligand>
</feature>
<feature type="binding site" evidence="1">
    <location>
        <begin position="357"/>
        <end position="360"/>
    </location>
    <ligand>
        <name>ATP</name>
        <dbReference type="ChEBI" id="CHEBI:30616"/>
    </ligand>
</feature>
<feature type="binding site" evidence="1">
    <location>
        <position position="393"/>
    </location>
    <ligand>
        <name>L-serine</name>
        <dbReference type="ChEBI" id="CHEBI:33384"/>
    </ligand>
</feature>